<dbReference type="EMBL" id="CP000698">
    <property type="protein sequence ID" value="ABQ27012.1"/>
    <property type="molecule type" value="Genomic_DNA"/>
</dbReference>
<dbReference type="RefSeq" id="WP_011939686.1">
    <property type="nucleotide sequence ID" value="NC_009483.1"/>
</dbReference>
<dbReference type="SMR" id="A5G5E4"/>
<dbReference type="STRING" id="351605.Gura_2839"/>
<dbReference type="KEGG" id="gur:Gura_2839"/>
<dbReference type="HOGENOM" id="CLU_169045_1_0_7"/>
<dbReference type="OrthoDB" id="284387at2"/>
<dbReference type="Proteomes" id="UP000006695">
    <property type="component" value="Chromosome"/>
</dbReference>
<dbReference type="GO" id="GO:0033172">
    <property type="term" value="C:gas vesicle shell"/>
    <property type="evidence" value="ECO:0007669"/>
    <property type="project" value="UniProtKB-UniRule"/>
</dbReference>
<dbReference type="GO" id="GO:0012506">
    <property type="term" value="C:vesicle membrane"/>
    <property type="evidence" value="ECO:0007669"/>
    <property type="project" value="InterPro"/>
</dbReference>
<dbReference type="GO" id="GO:0005198">
    <property type="term" value="F:structural molecule activity"/>
    <property type="evidence" value="ECO:0007669"/>
    <property type="project" value="InterPro"/>
</dbReference>
<dbReference type="HAMAP" id="MF_00576">
    <property type="entry name" value="Gas_vesicle_A"/>
    <property type="match status" value="1"/>
</dbReference>
<dbReference type="InterPro" id="IPR000638">
    <property type="entry name" value="Gas-vesicle_GvpA-like"/>
</dbReference>
<dbReference type="InterPro" id="IPR047870">
    <property type="entry name" value="Gas_vesicle_GvpA"/>
</dbReference>
<dbReference type="InterPro" id="IPR050530">
    <property type="entry name" value="GvpA"/>
</dbReference>
<dbReference type="InterPro" id="IPR018493">
    <property type="entry name" value="GvpA-like_CS"/>
</dbReference>
<dbReference type="NCBIfam" id="NF006874">
    <property type="entry name" value="PRK09371.1"/>
    <property type="match status" value="1"/>
</dbReference>
<dbReference type="PANTHER" id="PTHR35344:SF4">
    <property type="entry name" value="GAS VESICLE PROTEIN A1"/>
    <property type="match status" value="1"/>
</dbReference>
<dbReference type="PANTHER" id="PTHR35344">
    <property type="entry name" value="GAS VESICLE STRUCTURAL PROTEIN 2-RELATED"/>
    <property type="match status" value="1"/>
</dbReference>
<dbReference type="Pfam" id="PF00741">
    <property type="entry name" value="Gas_vesicle"/>
    <property type="match status" value="1"/>
</dbReference>
<dbReference type="PROSITE" id="PS00669">
    <property type="entry name" value="GAS_VESICLE_A_2"/>
    <property type="match status" value="1"/>
</dbReference>
<accession>A5G5E4</accession>
<sequence>MAVEKTNASSSLVEVIDRILDKGVCIDAWARVSLVGIELLAIEARVVVASVDTFLKYAEAVGLTTTATAMHA</sequence>
<proteinExistence type="inferred from homology"/>
<name>GVPA_GEOUR</name>
<keyword id="KW-0304">Gas vesicle</keyword>
<keyword id="KW-1185">Reference proteome</keyword>
<feature type="chain" id="PRO_1000082344" description="Gas vesicle protein A">
    <location>
        <begin position="1"/>
        <end position="72"/>
    </location>
</feature>
<organism>
    <name type="scientific">Geotalea uraniireducens (strain Rf4)</name>
    <name type="common">Geobacter uraniireducens</name>
    <dbReference type="NCBI Taxonomy" id="351605"/>
    <lineage>
        <taxon>Bacteria</taxon>
        <taxon>Pseudomonadati</taxon>
        <taxon>Thermodesulfobacteriota</taxon>
        <taxon>Desulfuromonadia</taxon>
        <taxon>Geobacterales</taxon>
        <taxon>Geobacteraceae</taxon>
        <taxon>Geotalea</taxon>
    </lineage>
</organism>
<comment type="function">
    <text evidence="1">Gas vesicles are hollow, gas filled proteinaceous nanostructures found in some microorganisms. During planktonic growth they allow positioning of the organism at a favorable depth for light or nutrient acquisition. GvpA forms the protein shell.</text>
</comment>
<comment type="subunit">
    <text evidence="1">The gas vesicle shell is 2 nm thick and consists of a single layer of this protein. It forms helical ribs nearly perpendicular to the long axis of the vesicle.</text>
</comment>
<comment type="subcellular location">
    <subcellularLocation>
        <location evidence="1">Gas vesicle shell</location>
    </subcellularLocation>
</comment>
<comment type="similarity">
    <text evidence="1">Belongs to the gas vesicle GvpA family.</text>
</comment>
<protein>
    <recommendedName>
        <fullName evidence="1">Gas vesicle protein A</fullName>
        <shortName evidence="1">GvpA</shortName>
    </recommendedName>
</protein>
<gene>
    <name evidence="1" type="primary">gvpA</name>
    <name type="ordered locus">Gura_2839</name>
</gene>
<reference key="1">
    <citation type="submission" date="2007-05" db="EMBL/GenBank/DDBJ databases">
        <title>Complete sequence of Geobacter uraniireducens Rf4.</title>
        <authorList>
            <consortium name="US DOE Joint Genome Institute"/>
            <person name="Copeland A."/>
            <person name="Lucas S."/>
            <person name="Lapidus A."/>
            <person name="Barry K."/>
            <person name="Detter J.C."/>
            <person name="Glavina del Rio T."/>
            <person name="Hammon N."/>
            <person name="Israni S."/>
            <person name="Dalin E."/>
            <person name="Tice H."/>
            <person name="Pitluck S."/>
            <person name="Chertkov O."/>
            <person name="Brettin T."/>
            <person name="Bruce D."/>
            <person name="Han C."/>
            <person name="Schmutz J."/>
            <person name="Larimer F."/>
            <person name="Land M."/>
            <person name="Hauser L."/>
            <person name="Kyrpides N."/>
            <person name="Mikhailova N."/>
            <person name="Shelobolina E."/>
            <person name="Aklujkar M."/>
            <person name="Lovley D."/>
            <person name="Richardson P."/>
        </authorList>
    </citation>
    <scope>NUCLEOTIDE SEQUENCE [LARGE SCALE GENOMIC DNA]</scope>
    <source>
        <strain>ATCC BAA-1134 / JCM 13001 / Rf4</strain>
    </source>
</reference>
<evidence type="ECO:0000255" key="1">
    <source>
        <dbReference type="HAMAP-Rule" id="MF_00576"/>
    </source>
</evidence>